<evidence type="ECO:0000255" key="1">
    <source>
        <dbReference type="HAMAP-Rule" id="MF_00443"/>
    </source>
</evidence>
<proteinExistence type="inferred from homology"/>
<dbReference type="EC" id="2.8.1.10" evidence="1"/>
<dbReference type="EMBL" id="AM889285">
    <property type="protein sequence ID" value="CAP55724.1"/>
    <property type="molecule type" value="Genomic_DNA"/>
</dbReference>
<dbReference type="EMBL" id="CP001189">
    <property type="protein sequence ID" value="ACI49813.1"/>
    <property type="molecule type" value="Genomic_DNA"/>
</dbReference>
<dbReference type="RefSeq" id="WP_012225292.1">
    <property type="nucleotide sequence ID" value="NC_010125.1"/>
</dbReference>
<dbReference type="SMR" id="A9HI56"/>
<dbReference type="STRING" id="272568.GDI1781"/>
<dbReference type="KEGG" id="gdi:GDI1781"/>
<dbReference type="KEGG" id="gdj:Gdia_0011"/>
<dbReference type="eggNOG" id="COG2022">
    <property type="taxonomic scope" value="Bacteria"/>
</dbReference>
<dbReference type="HOGENOM" id="CLU_062233_1_0_5"/>
<dbReference type="OrthoDB" id="9805935at2"/>
<dbReference type="UniPathway" id="UPA00060"/>
<dbReference type="Proteomes" id="UP000001176">
    <property type="component" value="Chromosome"/>
</dbReference>
<dbReference type="GO" id="GO:0005737">
    <property type="term" value="C:cytoplasm"/>
    <property type="evidence" value="ECO:0007669"/>
    <property type="project" value="UniProtKB-SubCell"/>
</dbReference>
<dbReference type="GO" id="GO:1990107">
    <property type="term" value="F:thiazole synthase activity"/>
    <property type="evidence" value="ECO:0007669"/>
    <property type="project" value="UniProtKB-EC"/>
</dbReference>
<dbReference type="GO" id="GO:0009229">
    <property type="term" value="P:thiamine diphosphate biosynthetic process"/>
    <property type="evidence" value="ECO:0007669"/>
    <property type="project" value="UniProtKB-UniRule"/>
</dbReference>
<dbReference type="CDD" id="cd04728">
    <property type="entry name" value="ThiG"/>
    <property type="match status" value="1"/>
</dbReference>
<dbReference type="Gene3D" id="3.20.20.70">
    <property type="entry name" value="Aldolase class I"/>
    <property type="match status" value="1"/>
</dbReference>
<dbReference type="HAMAP" id="MF_00443">
    <property type="entry name" value="ThiG"/>
    <property type="match status" value="1"/>
</dbReference>
<dbReference type="InterPro" id="IPR013785">
    <property type="entry name" value="Aldolase_TIM"/>
</dbReference>
<dbReference type="InterPro" id="IPR033983">
    <property type="entry name" value="Thiazole_synthase_ThiG"/>
</dbReference>
<dbReference type="InterPro" id="IPR008867">
    <property type="entry name" value="ThiG"/>
</dbReference>
<dbReference type="PANTHER" id="PTHR34266">
    <property type="entry name" value="THIAZOLE SYNTHASE"/>
    <property type="match status" value="1"/>
</dbReference>
<dbReference type="PANTHER" id="PTHR34266:SF2">
    <property type="entry name" value="THIAZOLE SYNTHASE"/>
    <property type="match status" value="1"/>
</dbReference>
<dbReference type="Pfam" id="PF05690">
    <property type="entry name" value="ThiG"/>
    <property type="match status" value="1"/>
</dbReference>
<dbReference type="SUPFAM" id="SSF110399">
    <property type="entry name" value="ThiG-like"/>
    <property type="match status" value="1"/>
</dbReference>
<gene>
    <name evidence="1" type="primary">thiG</name>
    <name type="ordered locus">GDI1781</name>
    <name type="ordered locus">Gdia_0011</name>
</gene>
<sequence>MLFYGTELKSRLMLGTAQYPSPEILSDAVRAAEAGVVTVSLRRESAGQRAGQAFWSMIRDLGVPVLPNTAGCHTVKEAVTTAHMAREVFDTDWIKLEVIGESDTLQPDMFGLVEAARILSRDGFKVFPYMTEDLVGAERLLQAGCEVLMPWGAPIGSGKGLNNVFGLRALRAHFPDVPLVVDAGIGLPSHAAQAMELGYDAVLINTAVAKAGDPVRMARAFRLAVEAGLIAREADPIEERDMAAPSTPVLGRAMLA</sequence>
<accession>A9HI56</accession>
<accession>B5ZJ35</accession>
<reference key="1">
    <citation type="journal article" date="2009" name="BMC Genomics">
        <title>Complete genome sequence of the sugarcane nitrogen-fixing endophyte Gluconacetobacter diazotrophicus Pal5.</title>
        <authorList>
            <person name="Bertalan M."/>
            <person name="Albano R."/>
            <person name="de Padua V."/>
            <person name="Rouws L."/>
            <person name="Rojas C."/>
            <person name="Hemerly A."/>
            <person name="Teixeira K."/>
            <person name="Schwab S."/>
            <person name="Araujo J."/>
            <person name="Oliveira A."/>
            <person name="Franca L."/>
            <person name="Magalhaes V."/>
            <person name="Alqueres S."/>
            <person name="Cardoso A."/>
            <person name="Almeida W."/>
            <person name="Loureiro M.M."/>
            <person name="Nogueira E."/>
            <person name="Cidade D."/>
            <person name="Oliveira D."/>
            <person name="Simao T."/>
            <person name="Macedo J."/>
            <person name="Valadao A."/>
            <person name="Dreschsel M."/>
            <person name="Freitas F."/>
            <person name="Vidal M."/>
            <person name="Guedes H."/>
            <person name="Rodrigues E."/>
            <person name="Meneses C."/>
            <person name="Brioso P."/>
            <person name="Pozzer L."/>
            <person name="Figueiredo D."/>
            <person name="Montano H."/>
            <person name="Junior J."/>
            <person name="de Souza Filho G."/>
            <person name="Martin Quintana Flores V."/>
            <person name="Ferreira B."/>
            <person name="Branco A."/>
            <person name="Gonzalez P."/>
            <person name="Guillobel H."/>
            <person name="Lemos M."/>
            <person name="Seibel L."/>
            <person name="Macedo J."/>
            <person name="Alves-Ferreira M."/>
            <person name="Sachetto-Martins G."/>
            <person name="Coelho A."/>
            <person name="Santos E."/>
            <person name="Amaral G."/>
            <person name="Neves A."/>
            <person name="Pacheco A.B."/>
            <person name="Carvalho D."/>
            <person name="Lery L."/>
            <person name="Bisch P."/>
            <person name="Rossle S.C."/>
            <person name="Urmenyi T."/>
            <person name="Rael Pereira A."/>
            <person name="Silva R."/>
            <person name="Rondinelli E."/>
            <person name="von Kruger W."/>
            <person name="Martins O."/>
            <person name="Baldani J.I."/>
            <person name="Ferreira P.C."/>
        </authorList>
    </citation>
    <scope>NUCLEOTIDE SEQUENCE [LARGE SCALE GENOMIC DNA]</scope>
    <source>
        <strain>ATCC 49037 / DSM 5601 / CCUG 37298 / CIP 103539 / LMG 7603 / PAl5</strain>
    </source>
</reference>
<reference key="2">
    <citation type="journal article" date="2010" name="Stand. Genomic Sci.">
        <title>Two genome sequences of the same bacterial strain, Gluconacetobacter diazotrophicus PAl 5, suggest a new standard in genome sequence submission.</title>
        <authorList>
            <person name="Giongo A."/>
            <person name="Tyler H.L."/>
            <person name="Zipperer U.N."/>
            <person name="Triplett E.W."/>
        </authorList>
    </citation>
    <scope>NUCLEOTIDE SEQUENCE [LARGE SCALE GENOMIC DNA]</scope>
    <source>
        <strain>ATCC 49037 / DSM 5601 / CCUG 37298 / CIP 103539 / LMG 7603 / PAl5</strain>
    </source>
</reference>
<comment type="function">
    <text evidence="1">Catalyzes the rearrangement of 1-deoxy-D-xylulose 5-phosphate (DXP) to produce the thiazole phosphate moiety of thiamine. Sulfur is provided by the thiocarboxylate moiety of the carrier protein ThiS. In vitro, sulfur can be provided by H(2)S.</text>
</comment>
<comment type="catalytic activity">
    <reaction evidence="1">
        <text>[ThiS sulfur-carrier protein]-C-terminal-Gly-aminoethanethioate + 2-iminoacetate + 1-deoxy-D-xylulose 5-phosphate = [ThiS sulfur-carrier protein]-C-terminal Gly-Gly + 2-[(2R,5Z)-2-carboxy-4-methylthiazol-5(2H)-ylidene]ethyl phosphate + 2 H2O + H(+)</text>
        <dbReference type="Rhea" id="RHEA:26297"/>
        <dbReference type="Rhea" id="RHEA-COMP:12909"/>
        <dbReference type="Rhea" id="RHEA-COMP:19908"/>
        <dbReference type="ChEBI" id="CHEBI:15377"/>
        <dbReference type="ChEBI" id="CHEBI:15378"/>
        <dbReference type="ChEBI" id="CHEBI:57792"/>
        <dbReference type="ChEBI" id="CHEBI:62899"/>
        <dbReference type="ChEBI" id="CHEBI:77846"/>
        <dbReference type="ChEBI" id="CHEBI:90778"/>
        <dbReference type="ChEBI" id="CHEBI:232372"/>
        <dbReference type="EC" id="2.8.1.10"/>
    </reaction>
</comment>
<comment type="pathway">
    <text evidence="1">Cofactor biosynthesis; thiamine diphosphate biosynthesis.</text>
</comment>
<comment type="subunit">
    <text evidence="1">Homotetramer. Forms heterodimers with either ThiH or ThiS.</text>
</comment>
<comment type="subcellular location">
    <subcellularLocation>
        <location evidence="1">Cytoplasm</location>
    </subcellularLocation>
</comment>
<comment type="similarity">
    <text evidence="1">Belongs to the ThiG family.</text>
</comment>
<organism>
    <name type="scientific">Gluconacetobacter diazotrophicus (strain ATCC 49037 / DSM 5601 / CCUG 37298 / CIP 103539 / LMG 7603 / PAl5)</name>
    <dbReference type="NCBI Taxonomy" id="272568"/>
    <lineage>
        <taxon>Bacteria</taxon>
        <taxon>Pseudomonadati</taxon>
        <taxon>Pseudomonadota</taxon>
        <taxon>Alphaproteobacteria</taxon>
        <taxon>Acetobacterales</taxon>
        <taxon>Acetobacteraceae</taxon>
        <taxon>Gluconacetobacter</taxon>
    </lineage>
</organism>
<keyword id="KW-0963">Cytoplasm</keyword>
<keyword id="KW-1185">Reference proteome</keyword>
<keyword id="KW-0704">Schiff base</keyword>
<keyword id="KW-0784">Thiamine biosynthesis</keyword>
<keyword id="KW-0808">Transferase</keyword>
<name>THIG_GLUDA</name>
<protein>
    <recommendedName>
        <fullName evidence="1">Thiazole synthase</fullName>
        <ecNumber evidence="1">2.8.1.10</ecNumber>
    </recommendedName>
</protein>
<feature type="chain" id="PRO_1000080871" description="Thiazole synthase">
    <location>
        <begin position="1"/>
        <end position="256"/>
    </location>
</feature>
<feature type="active site" description="Schiff-base intermediate with DXP" evidence="1">
    <location>
        <position position="95"/>
    </location>
</feature>
<feature type="binding site" evidence="1">
    <location>
        <position position="156"/>
    </location>
    <ligand>
        <name>1-deoxy-D-xylulose 5-phosphate</name>
        <dbReference type="ChEBI" id="CHEBI:57792"/>
    </ligand>
</feature>
<feature type="binding site" evidence="1">
    <location>
        <begin position="183"/>
        <end position="184"/>
    </location>
    <ligand>
        <name>1-deoxy-D-xylulose 5-phosphate</name>
        <dbReference type="ChEBI" id="CHEBI:57792"/>
    </ligand>
</feature>
<feature type="binding site" evidence="1">
    <location>
        <begin position="205"/>
        <end position="206"/>
    </location>
    <ligand>
        <name>1-deoxy-D-xylulose 5-phosphate</name>
        <dbReference type="ChEBI" id="CHEBI:57792"/>
    </ligand>
</feature>